<accession>Q9LK71</accession>
<accession>F4J2Q1</accession>
<sequence length="560" mass="63695">MFFRPCVHTVGRYSRARVPGLLSSLFFYRSCNNVLTNSLPTVTTAGRVSRYGYICRRSSTSAAERGVFLPFALTCRRNIHSIHEDEKKLERWKKIEESHPLDELVLDSVVKVFSNSTEYSKSKPWKTLDQKSSRGTGFAIAGRKILTNAHVVMAMNDHTFVDVKRHGSQIKYKAKVQKISHECDLAILEIDSDEFWKGMNPLELGDIPPLQEVVSVVGGENICITKGLVLRVETRIYDYSDSDLLSIQIDATINDENSGGPVIMGNKVVGVVYEIGFVIPTPIIKHFITSVQESRQYSCFGSLDLSYQSLENVQIRNHFKMSHEMTGILINKINSSSGAYKILRKDDIILAIDGVPIGNDEKVPFQNKRRIDFSYLVSMKKPGEKALVKVLRNGKEYEYNISLKPVKPNFTVQQFYNVPSYYIFGGFVFVPLTKTYLDSEHHQVKISERLADDINEGYQSLYGAQVEKVNGVEVKNLKHLCELIEECSTEDLRLEFKNHKVLVLNYESAKKATLQILERHKIKSVISKDICLPMLLDDPFKDNKINLLPWSVLPLMFDFS</sequence>
<dbReference type="EC" id="3.4.21.-"/>
<dbReference type="EMBL" id="AP000373">
    <property type="protein sequence ID" value="BAB01153.1"/>
    <property type="status" value="ALT_SEQ"/>
    <property type="molecule type" value="Genomic_DNA"/>
</dbReference>
<dbReference type="EMBL" id="CP002686">
    <property type="protein sequence ID" value="AEE75833.2"/>
    <property type="molecule type" value="Genomic_DNA"/>
</dbReference>
<dbReference type="RefSeq" id="NP_001319569.1">
    <property type="nucleotide sequence ID" value="NM_001338237.1"/>
</dbReference>
<dbReference type="SMR" id="Q9LK71"/>
<dbReference type="STRING" id="3702.Q9LK71"/>
<dbReference type="MEROPS" id="S01.A01"/>
<dbReference type="PaxDb" id="3702-AT3G16540.1"/>
<dbReference type="EnsemblPlants" id="AT3G16540.1">
    <property type="protein sequence ID" value="AT3G16540.1"/>
    <property type="gene ID" value="AT3G16540"/>
</dbReference>
<dbReference type="GeneID" id="820902"/>
<dbReference type="Gramene" id="AT3G16540.1">
    <property type="protein sequence ID" value="AT3G16540.1"/>
    <property type="gene ID" value="AT3G16540"/>
</dbReference>
<dbReference type="KEGG" id="ath:AT3G16540"/>
<dbReference type="Araport" id="AT3G16540"/>
<dbReference type="TAIR" id="AT3G16540">
    <property type="gene designation" value="DEG11"/>
</dbReference>
<dbReference type="eggNOG" id="KOG1320">
    <property type="taxonomic scope" value="Eukaryota"/>
</dbReference>
<dbReference type="HOGENOM" id="CLU_020120_10_2_1"/>
<dbReference type="InParanoid" id="Q9LK71"/>
<dbReference type="OMA" id="QKISHEC"/>
<dbReference type="PRO" id="PR:Q9LK71"/>
<dbReference type="Proteomes" id="UP000006548">
    <property type="component" value="Chromosome 3"/>
</dbReference>
<dbReference type="ExpressionAtlas" id="Q9LK71">
    <property type="expression patterns" value="baseline and differential"/>
</dbReference>
<dbReference type="GO" id="GO:0031966">
    <property type="term" value="C:mitochondrial membrane"/>
    <property type="evidence" value="ECO:0007669"/>
    <property type="project" value="UniProtKB-SubCell"/>
</dbReference>
<dbReference type="GO" id="GO:0004252">
    <property type="term" value="F:serine-type endopeptidase activity"/>
    <property type="evidence" value="ECO:0007669"/>
    <property type="project" value="InterPro"/>
</dbReference>
<dbReference type="GO" id="GO:0006508">
    <property type="term" value="P:proteolysis"/>
    <property type="evidence" value="ECO:0007669"/>
    <property type="project" value="UniProtKB-KW"/>
</dbReference>
<dbReference type="Gene3D" id="2.30.42.10">
    <property type="match status" value="1"/>
</dbReference>
<dbReference type="Gene3D" id="2.40.10.120">
    <property type="match status" value="1"/>
</dbReference>
<dbReference type="Gene3D" id="3.20.190.20">
    <property type="match status" value="2"/>
</dbReference>
<dbReference type="InterPro" id="IPR041517">
    <property type="entry name" value="DEGP_PDZ"/>
</dbReference>
<dbReference type="InterPro" id="IPR046449">
    <property type="entry name" value="DEGP_PDZ_sf"/>
</dbReference>
<dbReference type="InterPro" id="IPR001478">
    <property type="entry name" value="PDZ"/>
</dbReference>
<dbReference type="InterPro" id="IPR036034">
    <property type="entry name" value="PDZ_sf"/>
</dbReference>
<dbReference type="InterPro" id="IPR009003">
    <property type="entry name" value="Peptidase_S1_PA"/>
</dbReference>
<dbReference type="InterPro" id="IPR001940">
    <property type="entry name" value="Peptidase_S1C"/>
</dbReference>
<dbReference type="PANTHER" id="PTHR45980">
    <property type="match status" value="1"/>
</dbReference>
<dbReference type="PANTHER" id="PTHR45980:SF7">
    <property type="entry name" value="PROTEASE DO-LIKE 11, MITOCHONDRIAL-RELATED"/>
    <property type="match status" value="1"/>
</dbReference>
<dbReference type="Pfam" id="PF13180">
    <property type="entry name" value="PDZ_2"/>
    <property type="match status" value="1"/>
</dbReference>
<dbReference type="Pfam" id="PF17815">
    <property type="entry name" value="PDZ_3"/>
    <property type="match status" value="2"/>
</dbReference>
<dbReference type="Pfam" id="PF13365">
    <property type="entry name" value="Trypsin_2"/>
    <property type="match status" value="1"/>
</dbReference>
<dbReference type="PRINTS" id="PR00834">
    <property type="entry name" value="PROTEASES2C"/>
</dbReference>
<dbReference type="SUPFAM" id="SSF50156">
    <property type="entry name" value="PDZ domain-like"/>
    <property type="match status" value="1"/>
</dbReference>
<dbReference type="SUPFAM" id="SSF50494">
    <property type="entry name" value="Trypsin-like serine proteases"/>
    <property type="match status" value="1"/>
</dbReference>
<protein>
    <recommendedName>
        <fullName>Putative protease Do-like 11, mitochondrial</fullName>
        <ecNumber>3.4.21.-</ecNumber>
    </recommendedName>
</protein>
<organism>
    <name type="scientific">Arabidopsis thaliana</name>
    <name type="common">Mouse-ear cress</name>
    <dbReference type="NCBI Taxonomy" id="3702"/>
    <lineage>
        <taxon>Eukaryota</taxon>
        <taxon>Viridiplantae</taxon>
        <taxon>Streptophyta</taxon>
        <taxon>Embryophyta</taxon>
        <taxon>Tracheophyta</taxon>
        <taxon>Spermatophyta</taxon>
        <taxon>Magnoliopsida</taxon>
        <taxon>eudicotyledons</taxon>
        <taxon>Gunneridae</taxon>
        <taxon>Pentapetalae</taxon>
        <taxon>rosids</taxon>
        <taxon>malvids</taxon>
        <taxon>Brassicales</taxon>
        <taxon>Brassicaceae</taxon>
        <taxon>Camelineae</taxon>
        <taxon>Arabidopsis</taxon>
    </lineage>
</organism>
<evidence type="ECO:0000255" key="1"/>
<evidence type="ECO:0000305" key="2"/>
<keyword id="KW-0378">Hydrolase</keyword>
<keyword id="KW-0472">Membrane</keyword>
<keyword id="KW-0496">Mitochondrion</keyword>
<keyword id="KW-0645">Protease</keyword>
<keyword id="KW-1185">Reference proteome</keyword>
<keyword id="KW-0720">Serine protease</keyword>
<keyword id="KW-0809">Transit peptide</keyword>
<reference key="1">
    <citation type="journal article" date="2000" name="DNA Res.">
        <title>Structural analysis of Arabidopsis thaliana chromosome 3. II. Sequence features of the 4,251,695 bp regions covered by 90 P1, TAC and BAC clones.</title>
        <authorList>
            <person name="Kaneko T."/>
            <person name="Katoh T."/>
            <person name="Sato S."/>
            <person name="Nakamura Y."/>
            <person name="Asamizu E."/>
            <person name="Tabata S."/>
        </authorList>
    </citation>
    <scope>NUCLEOTIDE SEQUENCE [LARGE SCALE GENOMIC DNA]</scope>
    <source>
        <strain>cv. Columbia</strain>
    </source>
</reference>
<reference key="2">
    <citation type="journal article" date="2017" name="Plant J.">
        <title>Araport11: a complete reannotation of the Arabidopsis thaliana reference genome.</title>
        <authorList>
            <person name="Cheng C.Y."/>
            <person name="Krishnakumar V."/>
            <person name="Chan A.P."/>
            <person name="Thibaud-Nissen F."/>
            <person name="Schobel S."/>
            <person name="Town C.D."/>
        </authorList>
    </citation>
    <scope>GENOME REANNOTATION</scope>
    <source>
        <strain>cv. Columbia</strain>
    </source>
</reference>
<reference key="3">
    <citation type="journal article" date="2001" name="Plant Physiol.">
        <title>Chloroplast and mitochondrial proteases in Arabidopsis. A proposed nomenclature.</title>
        <authorList>
            <person name="Adam Z."/>
            <person name="Adamska I."/>
            <person name="Nakabayashi K."/>
            <person name="Ostersetzer O."/>
            <person name="Haussuhl K."/>
            <person name="Manuell A."/>
            <person name="Zheng B."/>
            <person name="Vallon O."/>
            <person name="Rodermel S.R."/>
            <person name="Shinozaki K."/>
            <person name="Clarke A.K."/>
        </authorList>
    </citation>
    <scope>GENE FAMILY</scope>
    <scope>NOMENCLATURE</scope>
</reference>
<proteinExistence type="inferred from homology"/>
<name>DGP11_ARATH</name>
<feature type="transit peptide" description="Mitochondrion" evidence="1">
    <location>
        <begin position="1"/>
        <end position="65"/>
    </location>
</feature>
<feature type="chain" id="PRO_0000045835" description="Putative protease Do-like 11, mitochondrial">
    <location>
        <begin position="66"/>
        <end position="560"/>
    </location>
</feature>
<feature type="domain" description="PDZ">
    <location>
        <begin position="288"/>
        <end position="384"/>
    </location>
</feature>
<feature type="region of interest" description="Serine protease">
    <location>
        <begin position="117"/>
        <end position="302"/>
    </location>
</feature>
<feature type="active site" description="Charge relay system" evidence="1">
    <location>
        <position position="150"/>
    </location>
</feature>
<feature type="active site" description="Charge relay system" evidence="1">
    <location>
        <position position="184"/>
    </location>
</feature>
<feature type="active site" description="Charge relay system" evidence="1">
    <location>
        <position position="258"/>
    </location>
</feature>
<comment type="function">
    <text>Putative serine protease.</text>
</comment>
<comment type="subcellular location">
    <subcellularLocation>
        <location evidence="2">Mitochondrion membrane</location>
    </subcellularLocation>
</comment>
<comment type="similarity">
    <text evidence="2">Belongs to the peptidase S1C family.</text>
</comment>
<comment type="sequence caution" evidence="2">
    <conflict type="erroneous gene model prediction">
        <sequence resource="EMBL-CDS" id="BAB01153"/>
    </conflict>
</comment>
<gene>
    <name type="primary">DEGP11</name>
    <name type="ordered locus">At3g16540</name>
    <name type="ORF">MDC8.17</name>
</gene>